<proteinExistence type="inferred from homology"/>
<dbReference type="EMBL" id="X17193">
    <property type="protein sequence ID" value="CAA35056.1"/>
    <property type="molecule type" value="Genomic_DNA"/>
</dbReference>
<dbReference type="PIR" id="S08237">
    <property type="entry name" value="S08237"/>
</dbReference>
<dbReference type="SMR" id="P15838"/>
<dbReference type="GO" id="GO:0045735">
    <property type="term" value="F:nutrient reservoir activity"/>
    <property type="evidence" value="ECO:0007669"/>
    <property type="project" value="UniProtKB-KW"/>
</dbReference>
<dbReference type="CDD" id="cd02243">
    <property type="entry name" value="cupin_11S_legumin_C"/>
    <property type="match status" value="1"/>
</dbReference>
<dbReference type="CDD" id="cd02242">
    <property type="entry name" value="cupin_11S_legumin_N"/>
    <property type="match status" value="1"/>
</dbReference>
<dbReference type="FunFam" id="2.60.120.10:FF:000073">
    <property type="entry name" value="Glycinin G1"/>
    <property type="match status" value="1"/>
</dbReference>
<dbReference type="Gene3D" id="2.60.120.10">
    <property type="entry name" value="Jelly Rolls"/>
    <property type="match status" value="2"/>
</dbReference>
<dbReference type="InterPro" id="IPR022379">
    <property type="entry name" value="11S_seedstore_CS"/>
</dbReference>
<dbReference type="InterPro" id="IPR006044">
    <property type="entry name" value="11S_seedstore_pln"/>
</dbReference>
<dbReference type="InterPro" id="IPR006045">
    <property type="entry name" value="Cupin_1"/>
</dbReference>
<dbReference type="InterPro" id="IPR014710">
    <property type="entry name" value="RmlC-like_jellyroll"/>
</dbReference>
<dbReference type="InterPro" id="IPR011051">
    <property type="entry name" value="RmlC_Cupin_sf"/>
</dbReference>
<dbReference type="InterPro" id="IPR050253">
    <property type="entry name" value="Seed_Storage-Functional"/>
</dbReference>
<dbReference type="PANTHER" id="PTHR31189:SF77">
    <property type="entry name" value="GLYCININ G3"/>
    <property type="match status" value="1"/>
</dbReference>
<dbReference type="PANTHER" id="PTHR31189">
    <property type="entry name" value="OS03G0336100 PROTEIN-RELATED"/>
    <property type="match status" value="1"/>
</dbReference>
<dbReference type="Pfam" id="PF00190">
    <property type="entry name" value="Cupin_1"/>
    <property type="match status" value="2"/>
</dbReference>
<dbReference type="PRINTS" id="PR00439">
    <property type="entry name" value="11SGLOBULIN"/>
</dbReference>
<dbReference type="SMART" id="SM00835">
    <property type="entry name" value="Cupin_1"/>
    <property type="match status" value="2"/>
</dbReference>
<dbReference type="SUPFAM" id="SSF51182">
    <property type="entry name" value="RmlC-like cupins"/>
    <property type="match status" value="1"/>
</dbReference>
<dbReference type="PROSITE" id="PS00305">
    <property type="entry name" value="11S_SEED_STORAGE"/>
    <property type="match status" value="1"/>
</dbReference>
<protein>
    <recommendedName>
        <fullName>Legumin A2</fullName>
    </recommendedName>
    <component>
        <recommendedName>
            <fullName>Legumin A2 alpha chain</fullName>
        </recommendedName>
        <alternativeName>
            <fullName>Legumin A2 acidic chain</fullName>
        </alternativeName>
    </component>
    <component>
        <recommendedName>
            <fullName>Legumin A2 beta chain</fullName>
        </recommendedName>
        <alternativeName>
            <fullName>Legumin A2 basic chain</fullName>
        </alternativeName>
    </component>
</protein>
<gene>
    <name type="primary">LEGA2</name>
</gene>
<evidence type="ECO:0000250" key="1"/>
<evidence type="ECO:0000255" key="2"/>
<evidence type="ECO:0000256" key="3">
    <source>
        <dbReference type="SAM" id="MobiDB-lite"/>
    </source>
</evidence>
<evidence type="ECO:0000305" key="4"/>
<keyword id="KW-1015">Disulfide bond</keyword>
<keyword id="KW-0708">Seed storage protein</keyword>
<keyword id="KW-0732">Signal</keyword>
<keyword id="KW-0758">Storage protein</keyword>
<comment type="function">
    <text>This protein found in the seeds of many leguminous and non-leguminous plants is the source of sulfur-containing amino acids in seed meals.</text>
</comment>
<comment type="subunit">
    <text>Hexamer; each subunit is composed of an acidic and a basic chain derived from a single precursor and linked by a disulfide bond.</text>
</comment>
<comment type="similarity">
    <text evidence="4">Belongs to the 11S seed storage protein (globulins) family.</text>
</comment>
<organism>
    <name type="scientific">Pisum sativum</name>
    <name type="common">Garden pea</name>
    <name type="synonym">Lathyrus oleraceus</name>
    <dbReference type="NCBI Taxonomy" id="3888"/>
    <lineage>
        <taxon>Eukaryota</taxon>
        <taxon>Viridiplantae</taxon>
        <taxon>Streptophyta</taxon>
        <taxon>Embryophyta</taxon>
        <taxon>Tracheophyta</taxon>
        <taxon>Spermatophyta</taxon>
        <taxon>Magnoliopsida</taxon>
        <taxon>eudicotyledons</taxon>
        <taxon>Gunneridae</taxon>
        <taxon>Pentapetalae</taxon>
        <taxon>rosids</taxon>
        <taxon>fabids</taxon>
        <taxon>Fabales</taxon>
        <taxon>Fabaceae</taxon>
        <taxon>Papilionoideae</taxon>
        <taxon>50 kb inversion clade</taxon>
        <taxon>NPAAA clade</taxon>
        <taxon>Hologalegina</taxon>
        <taxon>IRL clade</taxon>
        <taxon>Fabeae</taxon>
        <taxon>Pisum</taxon>
    </lineage>
</organism>
<name>LEGA2_PEA</name>
<reference key="1">
    <citation type="journal article" date="1990" name="Nucleic Acids Res.">
        <title>Nucleotide sequence of an A-type legumin gene from pea.</title>
        <authorList>
            <person name="Rerie W.G."/>
            <person name="Whitecross M.I."/>
            <person name="Higgins T.J.V."/>
        </authorList>
    </citation>
    <scope>NUCLEOTIDE SEQUENCE [GENOMIC DNA]</scope>
    <source>
        <strain>cv. Greenfeast</strain>
    </source>
</reference>
<feature type="signal peptide" evidence="2">
    <location>
        <begin position="1"/>
        <end position="22"/>
    </location>
</feature>
<feature type="chain" id="PRO_0000032068" description="Legumin A2 alpha chain">
    <location>
        <begin position="23"/>
        <end position="335"/>
    </location>
</feature>
<feature type="chain" id="PRO_0000032069" description="Legumin A2 beta chain">
    <location>
        <begin position="336"/>
        <end position="520"/>
    </location>
</feature>
<feature type="domain" description="Cupin type-1 1" evidence="2">
    <location>
        <begin position="37"/>
        <end position="233"/>
    </location>
</feature>
<feature type="domain" description="Cupin type-1 2" evidence="2">
    <location>
        <begin position="348"/>
        <end position="497"/>
    </location>
</feature>
<feature type="region of interest" description="Disordered" evidence="3">
    <location>
        <begin position="250"/>
        <end position="339"/>
    </location>
</feature>
<feature type="disulfide bond" evidence="1">
    <location>
        <begin position="32"/>
        <end position="65"/>
    </location>
</feature>
<feature type="disulfide bond" description="Interchain (between alpha and beta chains)" evidence="2">
    <location>
        <begin position="108"/>
        <end position="342"/>
    </location>
</feature>
<sequence>MATKLLALSLSFCFLLLGGCFALREQPEQNECQLERLNALEPDNRIESEGGLIETWNPNNKQFRCAGVALSRATLQHNALRRPYYSNAPQEIFIQQGNGYFGMVFPGCPETFEEPQESEQGEGRRYRDRHQKVNRFREGDIIAVPTGIVFWMYNDQDTPVIAVSLTDIRSSNNQLDQMPRRFYLAGNHEQEFLRYQHQQGGKQEQENEGNNIFSGFKRDFLEDAFNVNRHIVDRLQGRNEDEEKGAIVKVKGGLSIISPPEKQARHQRGSRQEEDEDEDEERQPRHQRGSRQEEEEDEDEERQPRHQRRRGEEEEEDKKERRGSQKGKSRRQGDNGLEETVCTAKLRLNIGPSSSPDIYNPEAGRIKTVTSLDLPVLRWLKLSAEHGSLHKNAMFVPHYNLNANSIIYALKGRARLQVVNCNGNTVFDGELEAGRALTVPQNYAVAAKSLSDRFSYVAFKTNDRAGIARLAGTSSVINNLPLDVVAATFNLQRNEARQLKSNNPFKFLVPARQSENRASA</sequence>
<accession>P15838</accession>